<evidence type="ECO:0000250" key="1">
    <source>
        <dbReference type="UniProtKB" id="Q7PNF2"/>
    </source>
</evidence>
<evidence type="ECO:0000255" key="2"/>
<evidence type="ECO:0000269" key="3">
    <source>
    </source>
</evidence>
<evidence type="ECO:0000303" key="4">
    <source>
    </source>
</evidence>
<evidence type="ECO:0000305" key="5"/>
<evidence type="ECO:0000312" key="6">
    <source>
        <dbReference type="EMBL" id="AAL68639.1"/>
    </source>
</evidence>
<evidence type="ECO:0000312" key="7">
    <source>
        <dbReference type="EMBL" id="EAA12585.2"/>
    </source>
</evidence>
<evidence type="ECO:0000312" key="8">
    <source>
        <dbReference type="Proteomes" id="UP000007062"/>
    </source>
</evidence>
<feature type="signal peptide" evidence="2">
    <location>
        <begin position="1"/>
        <end position="22"/>
    </location>
</feature>
<feature type="chain" id="PRO_5014587793" description="Short form salivary protein D7R5" evidence="2">
    <location>
        <begin position="23"/>
        <end position="166"/>
    </location>
</feature>
<feature type="disulfide bond" evidence="1">
    <location>
        <begin position="26"/>
        <end position="58"/>
    </location>
</feature>
<feature type="disulfide bond" evidence="1">
    <location>
        <begin position="39"/>
        <end position="166"/>
    </location>
</feature>
<feature type="disulfide bond" evidence="1">
    <location>
        <begin position="98"/>
        <end position="117"/>
    </location>
</feature>
<feature type="sequence conflict" description="In Ref. 2; AAL68639." evidence="5" ref="2">
    <original>S</original>
    <variation>Y</variation>
    <location>
        <position position="113"/>
    </location>
</feature>
<feature type="sequence conflict" description="In Ref. 2; AAL68639." evidence="5" ref="2">
    <original>Q</original>
    <variation>L</variation>
    <location>
        <position position="125"/>
    </location>
</feature>
<feature type="sequence conflict" description="In Ref. 2; AAL68639." evidence="5" ref="2">
    <original>L</original>
    <variation>Q</variation>
    <location>
        <position position="155"/>
    </location>
</feature>
<sequence length="166" mass="18797">MEWRYFVVIALICPLIIVETLAVSDCVRHVSESARNTVCDVRQYRVTKGVEADRYVQCFMTALGFADESGSIQRSNVLTALDAVETHDGVYTDAVDVCLSKAKKLPGTERSGSFFSCMLRTESAQNFRDAVELQELRVASKWPEGERFDRSKVQLMMRELNSQLRC</sequence>
<gene>
    <name evidence="4" type="primary">D7r5</name>
    <name evidence="7" type="ORF">AgaP_AGAP008280</name>
</gene>
<keyword id="KW-1015">Disulfide bond</keyword>
<keyword id="KW-1185">Reference proteome</keyword>
<keyword id="KW-0964">Secreted</keyword>
<keyword id="KW-0732">Signal</keyword>
<proteinExistence type="evidence at transcript level"/>
<organism evidence="7">
    <name type="scientific">Anopheles gambiae</name>
    <name type="common">African malaria mosquito</name>
    <dbReference type="NCBI Taxonomy" id="7165"/>
    <lineage>
        <taxon>Eukaryota</taxon>
        <taxon>Metazoa</taxon>
        <taxon>Ecdysozoa</taxon>
        <taxon>Arthropoda</taxon>
        <taxon>Hexapoda</taxon>
        <taxon>Insecta</taxon>
        <taxon>Pterygota</taxon>
        <taxon>Neoptera</taxon>
        <taxon>Endopterygota</taxon>
        <taxon>Diptera</taxon>
        <taxon>Nematocera</taxon>
        <taxon>Culicoidea</taxon>
        <taxon>Culicidae</taxon>
        <taxon>Anophelinae</taxon>
        <taxon>Anopheles</taxon>
    </lineage>
</organism>
<name>D7R5_ANOGA</name>
<accession>Q7PN86</accession>
<accession>Q8WR17</accession>
<comment type="function">
    <text evidence="3">In contrast to the related D7 salivary proteins, does not bind biogenic amines such as serotonin, noradrenaline, histamine and adrenaline (PubMed:16301315). It is hypothesized that either D7r5 evolved an as yet unknown function or is becoming a pseudogene (PubMed:16301315).</text>
</comment>
<comment type="subcellular location">
    <subcellularLocation>
        <location evidence="5">Secreted</location>
    </subcellularLocation>
</comment>
<comment type="similarity">
    <text evidence="5">Belongs to the PBP/GOBP family.</text>
</comment>
<reference evidence="8" key="1">
    <citation type="journal article" date="2002" name="Science">
        <title>The genome sequence of the malaria mosquito Anopheles gambiae.</title>
        <authorList>
            <person name="Holt R.A."/>
            <person name="Subramanian G.M."/>
            <person name="Halpern A."/>
            <person name="Sutton G.G."/>
            <person name="Charlab R."/>
            <person name="Nusskern D.R."/>
            <person name="Wincker P."/>
            <person name="Clark A.G."/>
            <person name="Ribeiro J.M.C."/>
            <person name="Wides R."/>
            <person name="Salzberg S.L."/>
            <person name="Loftus B.J."/>
            <person name="Yandell M.D."/>
            <person name="Majoros W.H."/>
            <person name="Rusch D.B."/>
            <person name="Lai Z."/>
            <person name="Kraft C.L."/>
            <person name="Abril J.F."/>
            <person name="Anthouard V."/>
            <person name="Arensburger P."/>
            <person name="Atkinson P.W."/>
            <person name="Baden H."/>
            <person name="de Berardinis V."/>
            <person name="Baldwin D."/>
            <person name="Benes V."/>
            <person name="Biedler J."/>
            <person name="Blass C."/>
            <person name="Bolanos R."/>
            <person name="Boscus D."/>
            <person name="Barnstead M."/>
            <person name="Cai S."/>
            <person name="Center A."/>
            <person name="Chaturverdi K."/>
            <person name="Christophides G.K."/>
            <person name="Chrystal M.A.M."/>
            <person name="Clamp M."/>
            <person name="Cravchik A."/>
            <person name="Curwen V."/>
            <person name="Dana A."/>
            <person name="Delcher A."/>
            <person name="Dew I."/>
            <person name="Evans C.A."/>
            <person name="Flanigan M."/>
            <person name="Grundschober-Freimoser A."/>
            <person name="Friedli L."/>
            <person name="Gu Z."/>
            <person name="Guan P."/>
            <person name="Guigo R."/>
            <person name="Hillenmeyer M.E."/>
            <person name="Hladun S.L."/>
            <person name="Hogan J.R."/>
            <person name="Hong Y.S."/>
            <person name="Hoover J."/>
            <person name="Jaillon O."/>
            <person name="Ke Z."/>
            <person name="Kodira C.D."/>
            <person name="Kokoza E."/>
            <person name="Koutsos A."/>
            <person name="Letunic I."/>
            <person name="Levitsky A.A."/>
            <person name="Liang Y."/>
            <person name="Lin J.-J."/>
            <person name="Lobo N.F."/>
            <person name="Lopez J.R."/>
            <person name="Malek J.A."/>
            <person name="McIntosh T.C."/>
            <person name="Meister S."/>
            <person name="Miller J.R."/>
            <person name="Mobarry C."/>
            <person name="Mongin E."/>
            <person name="Murphy S.D."/>
            <person name="O'Brochta D.A."/>
            <person name="Pfannkoch C."/>
            <person name="Qi R."/>
            <person name="Regier M.A."/>
            <person name="Remington K."/>
            <person name="Shao H."/>
            <person name="Sharakhova M.V."/>
            <person name="Sitter C.D."/>
            <person name="Shetty J."/>
            <person name="Smith T.J."/>
            <person name="Strong R."/>
            <person name="Sun J."/>
            <person name="Thomasova D."/>
            <person name="Ton L.Q."/>
            <person name="Topalis P."/>
            <person name="Tu Z.J."/>
            <person name="Unger M.F."/>
            <person name="Walenz B."/>
            <person name="Wang A.H."/>
            <person name="Wang J."/>
            <person name="Wang M."/>
            <person name="Wang X."/>
            <person name="Woodford K.J."/>
            <person name="Wortman J.R."/>
            <person name="Wu M."/>
            <person name="Yao A."/>
            <person name="Zdobnov E.M."/>
            <person name="Zhang H."/>
            <person name="Zhao Q."/>
            <person name="Zhao S."/>
            <person name="Zhu S.C."/>
            <person name="Zhimulev I."/>
            <person name="Coluzzi M."/>
            <person name="della Torre A."/>
            <person name="Roth C.W."/>
            <person name="Louis C."/>
            <person name="Kalush F."/>
            <person name="Mural R.J."/>
            <person name="Myers E.W."/>
            <person name="Adams M.D."/>
            <person name="Smith H.O."/>
            <person name="Broder S."/>
            <person name="Gardner M.J."/>
            <person name="Fraser C.M."/>
            <person name="Birney E."/>
            <person name="Bork P."/>
            <person name="Brey P.T."/>
            <person name="Venter J.C."/>
            <person name="Weissenbach J."/>
            <person name="Kafatos F.C."/>
            <person name="Collins F.H."/>
            <person name="Hoffman S.L."/>
        </authorList>
    </citation>
    <scope>NUCLEOTIDE SEQUENCE [LARGE SCALE GENOMIC DNA]</scope>
    <source>
        <strain evidence="8">PEST</strain>
    </source>
</reference>
<reference evidence="6" key="2">
    <citation type="journal article" date="2002" name="J. Exp. Biol.">
        <title>Toward a catalog for the transcripts and proteins (sialome) from the salivary gland of the malaria vector Anopheles gambiae.</title>
        <authorList>
            <person name="Francischetti I.M."/>
            <person name="Valenzuela J.G."/>
            <person name="Pham V.M."/>
            <person name="Garfield M.K."/>
            <person name="Ribeiro J.M."/>
        </authorList>
    </citation>
    <scope>NUCLEOTIDE SEQUENCE [LARGE SCALE MRNA]</scope>
</reference>
<reference evidence="5" key="3">
    <citation type="journal article" date="2006" name="J. Biol. Chem.">
        <title>Function and evolution of a mosquito salivary protein family.</title>
        <authorList>
            <person name="Calvo E."/>
            <person name="Mans B.J."/>
            <person name="Andersen J.F."/>
            <person name="Ribeiro J.M."/>
        </authorList>
    </citation>
    <scope>FUNCTION</scope>
</reference>
<dbReference type="EMBL" id="AAAB01008964">
    <property type="protein sequence ID" value="EAA12585.2"/>
    <property type="molecule type" value="Genomic_DNA"/>
</dbReference>
<dbReference type="EMBL" id="AF458073">
    <property type="protein sequence ID" value="AAL68639.1"/>
    <property type="molecule type" value="mRNA"/>
</dbReference>
<dbReference type="RefSeq" id="XP_317187.1">
    <property type="nucleotide sequence ID" value="XM_317187.3"/>
</dbReference>
<dbReference type="SMR" id="Q7PN86"/>
<dbReference type="PaxDb" id="7165-AGAP008280-PA"/>
<dbReference type="EnsemblMetazoa" id="AGAP008280-RA">
    <property type="protein sequence ID" value="AGAP008280-PA"/>
    <property type="gene ID" value="AGAP008280"/>
</dbReference>
<dbReference type="GeneID" id="1277702"/>
<dbReference type="KEGG" id="aga:1277702"/>
<dbReference type="CTD" id="1277702"/>
<dbReference type="VEuPathDB" id="VectorBase:AGAMI1_004494"/>
<dbReference type="VEuPathDB" id="VectorBase:AGAP008280"/>
<dbReference type="eggNOG" id="ENOG502T8SW">
    <property type="taxonomic scope" value="Eukaryota"/>
</dbReference>
<dbReference type="HOGENOM" id="CLU_1604121_0_0_1"/>
<dbReference type="InParanoid" id="Q7PN86"/>
<dbReference type="OMA" id="ADRYVQC"/>
<dbReference type="Proteomes" id="UP000007062">
    <property type="component" value="Chromosome 3R"/>
</dbReference>
<dbReference type="GO" id="GO:0005615">
    <property type="term" value="C:extracellular space"/>
    <property type="evidence" value="ECO:0000318"/>
    <property type="project" value="GO_Central"/>
</dbReference>
<dbReference type="GO" id="GO:0005549">
    <property type="term" value="F:odorant binding"/>
    <property type="evidence" value="ECO:0007669"/>
    <property type="project" value="InterPro"/>
</dbReference>
<dbReference type="GO" id="GO:0007608">
    <property type="term" value="P:sensory perception of smell"/>
    <property type="evidence" value="ECO:0000318"/>
    <property type="project" value="GO_Central"/>
</dbReference>
<dbReference type="FunFam" id="1.10.238.20:FF:000008">
    <property type="entry name" value="D7-related 4 protein"/>
    <property type="match status" value="1"/>
</dbReference>
<dbReference type="Gene3D" id="1.10.238.20">
    <property type="entry name" value="Pheromone/general odorant binding protein domain"/>
    <property type="match status" value="1"/>
</dbReference>
<dbReference type="InterPro" id="IPR006170">
    <property type="entry name" value="PBP/GOBP"/>
</dbReference>
<dbReference type="InterPro" id="IPR036728">
    <property type="entry name" value="PBP_GOBP_sf"/>
</dbReference>
<dbReference type="Pfam" id="PF01395">
    <property type="entry name" value="PBP_GOBP"/>
    <property type="match status" value="1"/>
</dbReference>
<dbReference type="SUPFAM" id="SSF47565">
    <property type="entry name" value="Insect pheromone/odorant-binding proteins"/>
    <property type="match status" value="1"/>
</dbReference>
<protein>
    <recommendedName>
        <fullName evidence="5">Short form salivary protein D7R5</fullName>
    </recommendedName>
</protein>